<evidence type="ECO:0000250" key="1">
    <source>
        <dbReference type="UniProtKB" id="P01539"/>
    </source>
</evidence>
<evidence type="ECO:0000269" key="2">
    <source>
    </source>
</evidence>
<evidence type="ECO:0000303" key="3">
    <source>
    </source>
</evidence>
<evidence type="ECO:0000305" key="4"/>
<protein>
    <recommendedName>
        <fullName evidence="3">Denclatoxin-B</fullName>
    </recommendedName>
</protein>
<sequence length="46" mass="4821">KSCCPTTAARNQYNICRLPGTPRPVCAALSGCKIISGTGCPPGYRH</sequence>
<proteinExistence type="evidence at protein level"/>
<dbReference type="PIR" id="A01804">
    <property type="entry name" value="DKDCB"/>
</dbReference>
<dbReference type="SMR" id="P01541"/>
<dbReference type="GO" id="GO:0005576">
    <property type="term" value="C:extracellular region"/>
    <property type="evidence" value="ECO:0007669"/>
    <property type="project" value="UniProtKB-SubCell"/>
</dbReference>
<dbReference type="GO" id="GO:0090729">
    <property type="term" value="F:toxin activity"/>
    <property type="evidence" value="ECO:0007669"/>
    <property type="project" value="UniProtKB-KW"/>
</dbReference>
<dbReference type="GO" id="GO:0006952">
    <property type="term" value="P:defense response"/>
    <property type="evidence" value="ECO:0007669"/>
    <property type="project" value="UniProtKB-KW"/>
</dbReference>
<dbReference type="FunFam" id="3.30.1350.10:FF:000001">
    <property type="entry name" value="Hellethionin-D"/>
    <property type="match status" value="1"/>
</dbReference>
<dbReference type="Gene3D" id="3.30.1350.10">
    <property type="entry name" value="Thionin-like"/>
    <property type="match status" value="1"/>
</dbReference>
<dbReference type="InterPro" id="IPR001010">
    <property type="entry name" value="Thionin"/>
</dbReference>
<dbReference type="InterPro" id="IPR036391">
    <property type="entry name" value="Thionin-like_sf"/>
</dbReference>
<dbReference type="PANTHER" id="PTHR33920">
    <property type="entry name" value="THIONIN-2.1-RELATED"/>
    <property type="match status" value="1"/>
</dbReference>
<dbReference type="PANTHER" id="PTHR33920:SF2">
    <property type="entry name" value="THIONIN-2.1-RELATED"/>
    <property type="match status" value="1"/>
</dbReference>
<dbReference type="Pfam" id="PF00321">
    <property type="entry name" value="Thionin"/>
    <property type="match status" value="1"/>
</dbReference>
<dbReference type="PRINTS" id="PR00287">
    <property type="entry name" value="THIONIN"/>
</dbReference>
<dbReference type="SUPFAM" id="SSF57429">
    <property type="entry name" value="Crambin-like"/>
    <property type="match status" value="1"/>
</dbReference>
<dbReference type="PROSITE" id="PS00271">
    <property type="entry name" value="THIONIN"/>
    <property type="match status" value="1"/>
</dbReference>
<accession>P01541</accession>
<keyword id="KW-0903">Direct protein sequencing</keyword>
<keyword id="KW-1015">Disulfide bond</keyword>
<keyword id="KW-0611">Plant defense</keyword>
<keyword id="KW-0964">Secreted</keyword>
<keyword id="KW-0800">Toxin</keyword>
<name>THN_DENCL</name>
<feature type="chain" id="PRO_0000221485" description="Denclatoxin-B" evidence="2">
    <location>
        <begin position="1"/>
        <end position="46"/>
    </location>
</feature>
<feature type="disulfide bond" evidence="1">
    <location>
        <begin position="3"/>
        <end position="40"/>
    </location>
</feature>
<feature type="disulfide bond" evidence="1">
    <location>
        <begin position="4"/>
        <end position="32"/>
    </location>
</feature>
<feature type="disulfide bond" evidence="1">
    <location>
        <begin position="16"/>
        <end position="26"/>
    </location>
</feature>
<organism>
    <name type="scientific">Dendrophthora clavata</name>
    <name type="common">Columbian mistletoe</name>
    <dbReference type="NCBI Taxonomy" id="3965"/>
    <lineage>
        <taxon>Eukaryota</taxon>
        <taxon>Viridiplantae</taxon>
        <taxon>Streptophyta</taxon>
        <taxon>Embryophyta</taxon>
        <taxon>Tracheophyta</taxon>
        <taxon>Spermatophyta</taxon>
        <taxon>Magnoliopsida</taxon>
        <taxon>eudicotyledons</taxon>
        <taxon>Gunneridae</taxon>
        <taxon>Pentapetalae</taxon>
        <taxon>Santalales</taxon>
        <taxon>Viscaceae</taxon>
        <taxon>Dendrophthora</taxon>
    </lineage>
</organism>
<reference key="1">
    <citation type="journal article" date="1977" name="Acta Pharm. Suec.">
        <title>Toxic proteins from the mistletoe Dendrophtora clavata. II. The amino acid sequence of denclatoxin B.</title>
        <authorList>
            <person name="Samuelsson G."/>
            <person name="Pettersson B."/>
        </authorList>
    </citation>
    <scope>PROTEIN SEQUENCE</scope>
    <scope>SUBCELLULAR LOCATION</scope>
</reference>
<comment type="function">
    <text>Thionins are small plant proteins which are toxic to animal cells. They seem to exert their toxic effect at the level of the cell membrane. Their precise function is not known.</text>
</comment>
<comment type="subcellular location">
    <subcellularLocation>
        <location evidence="2">Secreted</location>
    </subcellularLocation>
</comment>
<comment type="similarity">
    <text evidence="4">Belongs to the plant thionin (TC 1.C.44) family.</text>
</comment>